<sequence length="414" mass="47487">MTEKLQPLRGMKDLLPDDYKVHDYIINKARDVGVLYGYKQMSTPLVEYTKVFNRSMGESSDVISKEIYSFLDKSNDFVALRPEFTACIIRSLISNRLQHKLPLKFFSTGPVFRYDRPQAGRQRQFHQLNYEYIGAKGAITDADTLKLAVDILKALEIEQDTTLELNSLGCNESRSVYQQKLVEYLNDFKDQLSEESKIRLSKNPMRILDSKSETDQKIIANAPVLSEYYTDESKEYFEELIQYLDILGMKYSINPRLVRGLDYYCHTAFEFTTKKLGSQSTILAGGRYDGLAKIMGNNDDVPAIGFAAGIERIALMREYNISEVKPVFVLPIGKNNICYALEIVDKLRTENIAIIIESLGKIAKRMQRIFNENAQFIIFIGDEEQANNNLKIKDLKKAEEYIVDFAKALELLKK</sequence>
<dbReference type="EC" id="6.1.1.21" evidence="1"/>
<dbReference type="EMBL" id="CP001612">
    <property type="protein sequence ID" value="ACP53323.1"/>
    <property type="molecule type" value="Genomic_DNA"/>
</dbReference>
<dbReference type="RefSeq" id="WP_012719566.1">
    <property type="nucleotide sequence ID" value="NC_012633.1"/>
</dbReference>
<dbReference type="SMR" id="C3PN13"/>
<dbReference type="KEGG" id="raf:RAF_ORF0386"/>
<dbReference type="HOGENOM" id="CLU_025113_1_0_5"/>
<dbReference type="Proteomes" id="UP000002305">
    <property type="component" value="Chromosome"/>
</dbReference>
<dbReference type="GO" id="GO:0005737">
    <property type="term" value="C:cytoplasm"/>
    <property type="evidence" value="ECO:0007669"/>
    <property type="project" value="UniProtKB-SubCell"/>
</dbReference>
<dbReference type="GO" id="GO:0005524">
    <property type="term" value="F:ATP binding"/>
    <property type="evidence" value="ECO:0007669"/>
    <property type="project" value="UniProtKB-UniRule"/>
</dbReference>
<dbReference type="GO" id="GO:0004821">
    <property type="term" value="F:histidine-tRNA ligase activity"/>
    <property type="evidence" value="ECO:0007669"/>
    <property type="project" value="UniProtKB-UniRule"/>
</dbReference>
<dbReference type="GO" id="GO:0006427">
    <property type="term" value="P:histidyl-tRNA aminoacylation"/>
    <property type="evidence" value="ECO:0007669"/>
    <property type="project" value="UniProtKB-UniRule"/>
</dbReference>
<dbReference type="CDD" id="cd00773">
    <property type="entry name" value="HisRS-like_core"/>
    <property type="match status" value="1"/>
</dbReference>
<dbReference type="CDD" id="cd00859">
    <property type="entry name" value="HisRS_anticodon"/>
    <property type="match status" value="1"/>
</dbReference>
<dbReference type="Gene3D" id="3.40.50.800">
    <property type="entry name" value="Anticodon-binding domain"/>
    <property type="match status" value="1"/>
</dbReference>
<dbReference type="Gene3D" id="3.30.930.10">
    <property type="entry name" value="Bira Bifunctional Protein, Domain 2"/>
    <property type="match status" value="1"/>
</dbReference>
<dbReference type="HAMAP" id="MF_00127">
    <property type="entry name" value="His_tRNA_synth"/>
    <property type="match status" value="1"/>
</dbReference>
<dbReference type="InterPro" id="IPR006195">
    <property type="entry name" value="aa-tRNA-synth_II"/>
</dbReference>
<dbReference type="InterPro" id="IPR045864">
    <property type="entry name" value="aa-tRNA-synth_II/BPL/LPL"/>
</dbReference>
<dbReference type="InterPro" id="IPR004154">
    <property type="entry name" value="Anticodon-bd"/>
</dbReference>
<dbReference type="InterPro" id="IPR036621">
    <property type="entry name" value="Anticodon-bd_dom_sf"/>
</dbReference>
<dbReference type="InterPro" id="IPR015807">
    <property type="entry name" value="His-tRNA-ligase"/>
</dbReference>
<dbReference type="InterPro" id="IPR041715">
    <property type="entry name" value="HisRS-like_core"/>
</dbReference>
<dbReference type="InterPro" id="IPR004516">
    <property type="entry name" value="HisRS/HisZ"/>
</dbReference>
<dbReference type="InterPro" id="IPR033656">
    <property type="entry name" value="HisRS_anticodon"/>
</dbReference>
<dbReference type="NCBIfam" id="TIGR00442">
    <property type="entry name" value="hisS"/>
    <property type="match status" value="1"/>
</dbReference>
<dbReference type="PANTHER" id="PTHR43707:SF1">
    <property type="entry name" value="HISTIDINE--TRNA LIGASE, MITOCHONDRIAL-RELATED"/>
    <property type="match status" value="1"/>
</dbReference>
<dbReference type="PANTHER" id="PTHR43707">
    <property type="entry name" value="HISTIDYL-TRNA SYNTHETASE"/>
    <property type="match status" value="1"/>
</dbReference>
<dbReference type="Pfam" id="PF03129">
    <property type="entry name" value="HGTP_anticodon"/>
    <property type="match status" value="1"/>
</dbReference>
<dbReference type="Pfam" id="PF13393">
    <property type="entry name" value="tRNA-synt_His"/>
    <property type="match status" value="1"/>
</dbReference>
<dbReference type="PIRSF" id="PIRSF001549">
    <property type="entry name" value="His-tRNA_synth"/>
    <property type="match status" value="1"/>
</dbReference>
<dbReference type="SUPFAM" id="SSF52954">
    <property type="entry name" value="Class II aaRS ABD-related"/>
    <property type="match status" value="1"/>
</dbReference>
<dbReference type="SUPFAM" id="SSF55681">
    <property type="entry name" value="Class II aaRS and biotin synthetases"/>
    <property type="match status" value="1"/>
</dbReference>
<dbReference type="PROSITE" id="PS50862">
    <property type="entry name" value="AA_TRNA_LIGASE_II"/>
    <property type="match status" value="1"/>
</dbReference>
<accession>C3PN13</accession>
<proteinExistence type="inferred from homology"/>
<keyword id="KW-0030">Aminoacyl-tRNA synthetase</keyword>
<keyword id="KW-0067">ATP-binding</keyword>
<keyword id="KW-0963">Cytoplasm</keyword>
<keyword id="KW-0436">Ligase</keyword>
<keyword id="KW-0547">Nucleotide-binding</keyword>
<keyword id="KW-0648">Protein biosynthesis</keyword>
<comment type="catalytic activity">
    <reaction evidence="1">
        <text>tRNA(His) + L-histidine + ATP = L-histidyl-tRNA(His) + AMP + diphosphate + H(+)</text>
        <dbReference type="Rhea" id="RHEA:17313"/>
        <dbReference type="Rhea" id="RHEA-COMP:9665"/>
        <dbReference type="Rhea" id="RHEA-COMP:9689"/>
        <dbReference type="ChEBI" id="CHEBI:15378"/>
        <dbReference type="ChEBI" id="CHEBI:30616"/>
        <dbReference type="ChEBI" id="CHEBI:33019"/>
        <dbReference type="ChEBI" id="CHEBI:57595"/>
        <dbReference type="ChEBI" id="CHEBI:78442"/>
        <dbReference type="ChEBI" id="CHEBI:78527"/>
        <dbReference type="ChEBI" id="CHEBI:456215"/>
        <dbReference type="EC" id="6.1.1.21"/>
    </reaction>
</comment>
<comment type="subunit">
    <text evidence="1">Homodimer.</text>
</comment>
<comment type="subcellular location">
    <subcellularLocation>
        <location evidence="1">Cytoplasm</location>
    </subcellularLocation>
</comment>
<comment type="similarity">
    <text evidence="1">Belongs to the class-II aminoacyl-tRNA synthetase family.</text>
</comment>
<protein>
    <recommendedName>
        <fullName evidence="1">Histidine--tRNA ligase</fullName>
        <ecNumber evidence="1">6.1.1.21</ecNumber>
    </recommendedName>
    <alternativeName>
        <fullName evidence="1">Histidyl-tRNA synthetase</fullName>
        <shortName evidence="1">HisRS</shortName>
    </alternativeName>
</protein>
<reference key="1">
    <citation type="journal article" date="2009" name="BMC Genomics">
        <title>Analysis of the Rickettsia africae genome reveals that virulence acquisition in Rickettsia species may be explained by genome reduction.</title>
        <authorList>
            <person name="Fournier P.-E."/>
            <person name="El Karkouri K."/>
            <person name="Leroy Q."/>
            <person name="Robert C."/>
            <person name="Giumelli B."/>
            <person name="Renesto P."/>
            <person name="Socolovschi C."/>
            <person name="Parola P."/>
            <person name="Audic S."/>
            <person name="Raoult D."/>
        </authorList>
    </citation>
    <scope>NUCLEOTIDE SEQUENCE [LARGE SCALE GENOMIC DNA]</scope>
    <source>
        <strain>ESF-5</strain>
    </source>
</reference>
<evidence type="ECO:0000255" key="1">
    <source>
        <dbReference type="HAMAP-Rule" id="MF_00127"/>
    </source>
</evidence>
<name>SYH_RICAE</name>
<organism>
    <name type="scientific">Rickettsia africae (strain ESF-5)</name>
    <dbReference type="NCBI Taxonomy" id="347255"/>
    <lineage>
        <taxon>Bacteria</taxon>
        <taxon>Pseudomonadati</taxon>
        <taxon>Pseudomonadota</taxon>
        <taxon>Alphaproteobacteria</taxon>
        <taxon>Rickettsiales</taxon>
        <taxon>Rickettsiaceae</taxon>
        <taxon>Rickettsieae</taxon>
        <taxon>Rickettsia</taxon>
        <taxon>spotted fever group</taxon>
    </lineage>
</organism>
<gene>
    <name evidence="1" type="primary">hisS</name>
    <name type="ordered locus">RAF_ORF0386</name>
</gene>
<feature type="chain" id="PRO_1000203145" description="Histidine--tRNA ligase">
    <location>
        <begin position="1"/>
        <end position="414"/>
    </location>
</feature>